<gene>
    <name type="primary">HSP22</name>
</gene>
<dbReference type="EMBL" id="X07188">
    <property type="protein sequence ID" value="CAA30168.1"/>
    <property type="molecule type" value="mRNA"/>
</dbReference>
<dbReference type="PIR" id="S00375">
    <property type="entry name" value="S00375"/>
</dbReference>
<dbReference type="SMR" id="P09887"/>
<dbReference type="FunCoup" id="P09887">
    <property type="interactions" value="95"/>
</dbReference>
<dbReference type="STRING" id="3847.P09887"/>
<dbReference type="PaxDb" id="3847-GLYMA04G40790.1"/>
<dbReference type="eggNOG" id="KOG0710">
    <property type="taxonomic scope" value="Eukaryota"/>
</dbReference>
<dbReference type="InParanoid" id="P09887"/>
<dbReference type="Proteomes" id="UP000008827">
    <property type="component" value="Unplaced"/>
</dbReference>
<dbReference type="GO" id="GO:0009507">
    <property type="term" value="C:chloroplast"/>
    <property type="evidence" value="ECO:0007669"/>
    <property type="project" value="UniProtKB-SubCell"/>
</dbReference>
<dbReference type="GO" id="GO:0009408">
    <property type="term" value="P:response to heat"/>
    <property type="evidence" value="ECO:0007669"/>
    <property type="project" value="InterPro"/>
</dbReference>
<dbReference type="CDD" id="cd06464">
    <property type="entry name" value="ACD_sHsps-like"/>
    <property type="match status" value="1"/>
</dbReference>
<dbReference type="FunFam" id="2.60.40.790:FF:000059">
    <property type="entry name" value="26.5 kDa heat shock protein, mitochondrial"/>
    <property type="match status" value="1"/>
</dbReference>
<dbReference type="Gene3D" id="2.60.40.790">
    <property type="match status" value="1"/>
</dbReference>
<dbReference type="InterPro" id="IPR002068">
    <property type="entry name" value="A-crystallin/Hsp20_dom"/>
</dbReference>
<dbReference type="InterPro" id="IPR008978">
    <property type="entry name" value="HSP20-like_chaperone"/>
</dbReference>
<dbReference type="InterPro" id="IPR044587">
    <property type="entry name" value="HSP21-like"/>
</dbReference>
<dbReference type="PANTHER" id="PTHR46733">
    <property type="entry name" value="26.5 KDA HEAT SHOCK PROTEIN, MITOCHONDRIAL"/>
    <property type="match status" value="1"/>
</dbReference>
<dbReference type="PANTHER" id="PTHR46733:SF4">
    <property type="entry name" value="HEAT SHOCK PROTEIN 21, CHLOROPLASTIC"/>
    <property type="match status" value="1"/>
</dbReference>
<dbReference type="Pfam" id="PF00011">
    <property type="entry name" value="HSP20"/>
    <property type="match status" value="1"/>
</dbReference>
<dbReference type="SUPFAM" id="SSF49764">
    <property type="entry name" value="HSP20-like chaperones"/>
    <property type="match status" value="1"/>
</dbReference>
<dbReference type="PROSITE" id="PS01031">
    <property type="entry name" value="SHSP"/>
    <property type="match status" value="1"/>
</dbReference>
<evidence type="ECO:0000255" key="1">
    <source>
        <dbReference type="PROSITE-ProRule" id="PRU00285"/>
    </source>
</evidence>
<evidence type="ECO:0000256" key="2">
    <source>
        <dbReference type="SAM" id="MobiDB-lite"/>
    </source>
</evidence>
<protein>
    <recommendedName>
        <fullName>Small heat shock protein, chloroplastic</fullName>
    </recommendedName>
</protein>
<feature type="chain" id="PRO_0000126001" description="Small heat shock protein, chloroplastic">
    <location>
        <begin position="1" status="less than"/>
        <end position="181"/>
    </location>
</feature>
<feature type="domain" description="sHSP" evidence="1">
    <location>
        <begin position="71"/>
        <end position="181"/>
    </location>
</feature>
<feature type="region of interest" description="Disordered" evidence="2">
    <location>
        <begin position="1"/>
        <end position="30"/>
    </location>
</feature>
<feature type="compositionally biased region" description="Basic and acidic residues" evidence="2">
    <location>
        <begin position="1"/>
        <end position="16"/>
    </location>
</feature>
<feature type="non-terminal residue">
    <location>
        <position position="1"/>
    </location>
</feature>
<accession>P09887</accession>
<comment type="subcellular location">
    <subcellularLocation>
        <location>Plastid</location>
        <location>Chloroplast</location>
    </subcellularLocation>
</comment>
<comment type="similarity">
    <text evidence="1">Belongs to the small heat shock protein (HSP20) family.</text>
</comment>
<reference key="1">
    <citation type="journal article" date="1988" name="EMBO J.">
        <title>A heat shock protein localized to chloroplasts is a member of a eukaryotic superfamily of heat shock proteins.</title>
        <authorList>
            <person name="Vierling E."/>
            <person name="Nagao R.T."/>
            <person name="Derocher A.E."/>
            <person name="Harris L.M."/>
        </authorList>
    </citation>
    <scope>NUCLEOTIDE SEQUENCE [MRNA]</scope>
    <source>
        <strain>cv. Corsoy</strain>
    </source>
</reference>
<organism>
    <name type="scientific">Glycine max</name>
    <name type="common">Soybean</name>
    <name type="synonym">Glycine hispida</name>
    <dbReference type="NCBI Taxonomy" id="3847"/>
    <lineage>
        <taxon>Eukaryota</taxon>
        <taxon>Viridiplantae</taxon>
        <taxon>Streptophyta</taxon>
        <taxon>Embryophyta</taxon>
        <taxon>Tracheophyta</taxon>
        <taxon>Spermatophyta</taxon>
        <taxon>Magnoliopsida</taxon>
        <taxon>eudicotyledons</taxon>
        <taxon>Gunneridae</taxon>
        <taxon>Pentapetalae</taxon>
        <taxon>rosids</taxon>
        <taxon>fabids</taxon>
        <taxon>Fabales</taxon>
        <taxon>Fabaceae</taxon>
        <taxon>Papilionoideae</taxon>
        <taxon>50 kb inversion clade</taxon>
        <taxon>NPAAA clade</taxon>
        <taxon>indigoferoid/millettioid clade</taxon>
        <taxon>Phaseoleae</taxon>
        <taxon>Glycine</taxon>
        <taxon>Glycine subgen. Soja</taxon>
    </lineage>
</organism>
<sequence length="181" mass="20535">GGDNKDNSVEVQHVSKGDQGTAVEKKPRRTAMDISPFGILDPWSPMRSMRQILDTMDRVFEDTMTFPGRNIGGGEIRAPWDIKDEEHEIRMRFDMPGLAKEDVKVSVEDDMLVIKGGHKSEQEHGGDDSWSSRTYSSYDTRLKLPDNCEKDKVKAELKNGVLYITIPKTKVERKVIDVQVQ</sequence>
<keyword id="KW-0150">Chloroplast</keyword>
<keyword id="KW-0934">Plastid</keyword>
<keyword id="KW-1185">Reference proteome</keyword>
<keyword id="KW-0346">Stress response</keyword>
<name>HS22C_SOYBN</name>
<proteinExistence type="evidence at transcript level"/>